<accession>Q29614</accession>
<proteinExistence type="evidence at transcript level"/>
<dbReference type="EMBL" id="L14959">
    <property type="protein sequence ID" value="AAA31597.1"/>
    <property type="molecule type" value="Genomic_DNA"/>
</dbReference>
<dbReference type="EMBL" id="L14954">
    <property type="protein sequence ID" value="AAA31597.1"/>
    <property type="status" value="JOINED"/>
    <property type="molecule type" value="Genomic_DNA"/>
</dbReference>
<dbReference type="EMBL" id="L14955">
    <property type="protein sequence ID" value="AAA31597.1"/>
    <property type="status" value="JOINED"/>
    <property type="molecule type" value="Genomic_DNA"/>
</dbReference>
<dbReference type="EMBL" id="L14956">
    <property type="protein sequence ID" value="AAA31597.1"/>
    <property type="status" value="JOINED"/>
    <property type="molecule type" value="Genomic_DNA"/>
</dbReference>
<dbReference type="EMBL" id="L14957">
    <property type="protein sequence ID" value="AAA31597.1"/>
    <property type="status" value="JOINED"/>
    <property type="molecule type" value="Genomic_DNA"/>
</dbReference>
<dbReference type="EMBL" id="L14958">
    <property type="protein sequence ID" value="AAA31597.1"/>
    <property type="status" value="JOINED"/>
    <property type="molecule type" value="Genomic_DNA"/>
</dbReference>
<dbReference type="EMBL" id="X15212">
    <property type="protein sequence ID" value="CAA33282.1"/>
    <property type="molecule type" value="mRNA"/>
</dbReference>
<dbReference type="SMR" id="Q29614"/>
<dbReference type="GO" id="GO:0005576">
    <property type="term" value="C:extracellular region"/>
    <property type="evidence" value="ECO:0007669"/>
    <property type="project" value="UniProtKB-SubCell"/>
</dbReference>
<dbReference type="GO" id="GO:0019841">
    <property type="term" value="F:retinol binding"/>
    <property type="evidence" value="ECO:0007669"/>
    <property type="project" value="UniProtKB-KW"/>
</dbReference>
<dbReference type="CDD" id="cd19416">
    <property type="entry name" value="lipocalin_beta-LG-like"/>
    <property type="match status" value="1"/>
</dbReference>
<dbReference type="Gene3D" id="2.40.128.20">
    <property type="match status" value="1"/>
</dbReference>
<dbReference type="InterPro" id="IPR012674">
    <property type="entry name" value="Calycin"/>
</dbReference>
<dbReference type="InterPro" id="IPR002345">
    <property type="entry name" value="Lipocalin"/>
</dbReference>
<dbReference type="InterPro" id="IPR000566">
    <property type="entry name" value="Lipocln_cytosolic_FA-bd_dom"/>
</dbReference>
<dbReference type="PANTHER" id="PTHR11430:SF117">
    <property type="entry name" value="GLYCODELIN"/>
    <property type="match status" value="1"/>
</dbReference>
<dbReference type="PANTHER" id="PTHR11430">
    <property type="entry name" value="LIPOCALIN"/>
    <property type="match status" value="1"/>
</dbReference>
<dbReference type="Pfam" id="PF00061">
    <property type="entry name" value="Lipocalin"/>
    <property type="match status" value="1"/>
</dbReference>
<dbReference type="SUPFAM" id="SSF50814">
    <property type="entry name" value="Lipocalins"/>
    <property type="match status" value="1"/>
</dbReference>
<keyword id="KW-1015">Disulfide bond</keyword>
<keyword id="KW-0494">Milk protein</keyword>
<keyword id="KW-0683">Retinol-binding</keyword>
<keyword id="KW-0964">Secreted</keyword>
<keyword id="KW-0732">Signal</keyword>
<keyword id="KW-0813">Transport</keyword>
<feature type="signal peptide" evidence="1">
    <location>
        <begin position="1"/>
        <end position="18"/>
    </location>
</feature>
<feature type="chain" id="PRO_0000017908" description="Beta-lactoglobulin">
    <location>
        <begin position="19"/>
        <end position="174"/>
    </location>
</feature>
<feature type="disulfide bond" evidence="1">
    <location>
        <begin position="79"/>
        <end position="172"/>
    </location>
</feature>
<feature type="disulfide bond" evidence="1">
    <location>
        <begin position="122"/>
        <end position="134"/>
    </location>
</feature>
<feature type="sequence conflict" description="In Ref. 3; CAA33282." evidence="2" ref="3">
    <original>A</original>
    <variation>T</variation>
    <location>
        <position position="76"/>
    </location>
</feature>
<name>LACB_NOTEU</name>
<organism>
    <name type="scientific">Notamacropus eugenii</name>
    <name type="common">Tammar wallaby</name>
    <name type="synonym">Macropus eugenii</name>
    <dbReference type="NCBI Taxonomy" id="9315"/>
    <lineage>
        <taxon>Eukaryota</taxon>
        <taxon>Metazoa</taxon>
        <taxon>Chordata</taxon>
        <taxon>Craniata</taxon>
        <taxon>Vertebrata</taxon>
        <taxon>Euteleostomi</taxon>
        <taxon>Mammalia</taxon>
        <taxon>Metatheria</taxon>
        <taxon>Diprotodontia</taxon>
        <taxon>Macropodidae</taxon>
        <taxon>Notamacropus</taxon>
    </lineage>
</organism>
<comment type="function">
    <text>Lactoglobulin is the primary component of whey, it binds retinol and is probably involved in the transport of that molecule.</text>
</comment>
<comment type="subunit">
    <text evidence="1">Monomer.</text>
</comment>
<comment type="subcellular location">
    <subcellularLocation>
        <location evidence="1">Secreted</location>
    </subcellularLocation>
</comment>
<comment type="similarity">
    <text evidence="2">Belongs to the calycin superfamily. Lipocalin family.</text>
</comment>
<evidence type="ECO:0000250" key="1"/>
<evidence type="ECO:0000305" key="2"/>
<gene>
    <name type="primary">LGB</name>
    <name type="synonym">BLG</name>
</gene>
<sequence length="174" mass="20220">MKFLLLTVGLALIGAIQAVENIRSKNDLGVEKFVGSWYLREAAKTMEFSIPLFDMDIKEVNLTPEGNLELVLLEKADRCVEKKLLLKKTQKPTEFEIYISSESASYTFSVMETDYDSYFLFCLYNISDREKMACAHYVRRIEENKGMNEFKKILRTLAMPYTVIEVRTRDMCHV</sequence>
<reference key="1">
    <citation type="journal article" date="1991" name="J. Mol. Endocrinol.">
        <title>A marsupial beta-lactoglobulin gene: characterization and prolactin-dependent expression.</title>
        <authorList>
            <person name="Collet C."/>
            <person name="Joseph R."/>
            <person name="Nicholas K.R."/>
        </authorList>
    </citation>
    <scope>NUCLEOTIDE SEQUENCE [MRNA]</scope>
</reference>
<reference key="2">
    <citation type="journal article" date="1995" name="Biochem. Genet.">
        <title>Exon organization and sequence of the genes encoding alpha-lactalbumin and beta-lactoglobulin from the tammar wallaby (Macropodidae, Marsupialia).</title>
        <authorList>
            <person name="Collet C."/>
            <person name="Joseph R."/>
        </authorList>
    </citation>
    <scope>NUCLEOTIDE SEQUENCE [GENOMIC DNA]</scope>
</reference>
<reference key="3">
    <citation type="journal article" date="1994" name="Biochem. Genet.">
        <title>The identification of nuclear and mitochondrial genes by sequencing randomly chosen clones from a marsupial mammary gland cDNA library.</title>
        <authorList>
            <person name="Collet C."/>
            <person name="Joseph R."/>
        </authorList>
    </citation>
    <scope>NUCLEOTIDE SEQUENCE [MRNA] OF 47-174</scope>
    <source>
        <tissue>Mammary gland</tissue>
    </source>
</reference>
<protein>
    <recommendedName>
        <fullName>Beta-lactoglobulin</fullName>
        <shortName>Beta-LG</shortName>
    </recommendedName>
</protein>